<organism>
    <name type="scientific">Thermotoga sp. (strain RQ2)</name>
    <dbReference type="NCBI Taxonomy" id="126740"/>
    <lineage>
        <taxon>Bacteria</taxon>
        <taxon>Thermotogati</taxon>
        <taxon>Thermotogota</taxon>
        <taxon>Thermotogae</taxon>
        <taxon>Thermotogales</taxon>
        <taxon>Thermotogaceae</taxon>
        <taxon>Thermotoga</taxon>
    </lineage>
</organism>
<name>RL16_THESQ</name>
<evidence type="ECO:0000255" key="1">
    <source>
        <dbReference type="HAMAP-Rule" id="MF_01342"/>
    </source>
</evidence>
<evidence type="ECO:0000305" key="2"/>
<sequence length="142" mass="15936">MLMPRRVKYRKQQRGRMKGKAKGGTFVQFGEWGLKALEPAWITAQQIEACRIAMLRAMKRSGKIWIRIFPDKPYTKKPPESRMGKGKGNVEGWVAVVKPGKILFEVAGVDEETAHEALRYAASKLPIATKVVPRHHIGGEAV</sequence>
<gene>
    <name evidence="1" type="primary">rplP</name>
    <name type="ordered locus">TRQ2_1387</name>
</gene>
<accession>B1LBN3</accession>
<reference key="1">
    <citation type="journal article" date="2011" name="J. Bacteriol.">
        <title>Genome sequence of Thermotoga sp. strain RQ2, a hyperthermophilic bacterium isolated from a geothermally heated region of the seafloor near Ribeira Quente, the Azores.</title>
        <authorList>
            <person name="Swithers K.S."/>
            <person name="DiPippo J.L."/>
            <person name="Bruce D.C."/>
            <person name="Detter C."/>
            <person name="Tapia R."/>
            <person name="Han S."/>
            <person name="Saunders E."/>
            <person name="Goodwin L.A."/>
            <person name="Han J."/>
            <person name="Woyke T."/>
            <person name="Pitluck S."/>
            <person name="Pennacchio L."/>
            <person name="Nolan M."/>
            <person name="Mikhailova N."/>
            <person name="Lykidis A."/>
            <person name="Land M.L."/>
            <person name="Brettin T."/>
            <person name="Stetter K.O."/>
            <person name="Nelson K.E."/>
            <person name="Gogarten J.P."/>
            <person name="Noll K.M."/>
        </authorList>
    </citation>
    <scope>NUCLEOTIDE SEQUENCE [LARGE SCALE GENOMIC DNA]</scope>
    <source>
        <strain>RQ2</strain>
    </source>
</reference>
<feature type="chain" id="PRO_1000143043" description="Large ribosomal subunit protein uL16">
    <location>
        <begin position="1"/>
        <end position="142"/>
    </location>
</feature>
<protein>
    <recommendedName>
        <fullName evidence="1">Large ribosomal subunit protein uL16</fullName>
    </recommendedName>
    <alternativeName>
        <fullName evidence="2">50S ribosomal protein L16</fullName>
    </alternativeName>
</protein>
<dbReference type="EMBL" id="CP000969">
    <property type="protein sequence ID" value="ACB09731.1"/>
    <property type="molecule type" value="Genomic_DNA"/>
</dbReference>
<dbReference type="RefSeq" id="WP_011943789.1">
    <property type="nucleotide sequence ID" value="NC_010483.1"/>
</dbReference>
<dbReference type="SMR" id="B1LBN3"/>
<dbReference type="KEGG" id="trq:TRQ2_1387"/>
<dbReference type="HOGENOM" id="CLU_078858_2_1_0"/>
<dbReference type="Proteomes" id="UP000001687">
    <property type="component" value="Chromosome"/>
</dbReference>
<dbReference type="GO" id="GO:0022625">
    <property type="term" value="C:cytosolic large ribosomal subunit"/>
    <property type="evidence" value="ECO:0007669"/>
    <property type="project" value="TreeGrafter"/>
</dbReference>
<dbReference type="GO" id="GO:0019843">
    <property type="term" value="F:rRNA binding"/>
    <property type="evidence" value="ECO:0007669"/>
    <property type="project" value="UniProtKB-UniRule"/>
</dbReference>
<dbReference type="GO" id="GO:0003735">
    <property type="term" value="F:structural constituent of ribosome"/>
    <property type="evidence" value="ECO:0007669"/>
    <property type="project" value="InterPro"/>
</dbReference>
<dbReference type="GO" id="GO:0000049">
    <property type="term" value="F:tRNA binding"/>
    <property type="evidence" value="ECO:0007669"/>
    <property type="project" value="UniProtKB-KW"/>
</dbReference>
<dbReference type="GO" id="GO:0006412">
    <property type="term" value="P:translation"/>
    <property type="evidence" value="ECO:0007669"/>
    <property type="project" value="UniProtKB-UniRule"/>
</dbReference>
<dbReference type="CDD" id="cd01433">
    <property type="entry name" value="Ribosomal_L16_L10e"/>
    <property type="match status" value="1"/>
</dbReference>
<dbReference type="FunFam" id="3.90.1170.10:FF:000001">
    <property type="entry name" value="50S ribosomal protein L16"/>
    <property type="match status" value="1"/>
</dbReference>
<dbReference type="Gene3D" id="3.90.1170.10">
    <property type="entry name" value="Ribosomal protein L10e/L16"/>
    <property type="match status" value="1"/>
</dbReference>
<dbReference type="HAMAP" id="MF_01342">
    <property type="entry name" value="Ribosomal_uL16"/>
    <property type="match status" value="1"/>
</dbReference>
<dbReference type="InterPro" id="IPR047873">
    <property type="entry name" value="Ribosomal_uL16"/>
</dbReference>
<dbReference type="InterPro" id="IPR000114">
    <property type="entry name" value="Ribosomal_uL16_bact-type"/>
</dbReference>
<dbReference type="InterPro" id="IPR020798">
    <property type="entry name" value="Ribosomal_uL16_CS"/>
</dbReference>
<dbReference type="InterPro" id="IPR016180">
    <property type="entry name" value="Ribosomal_uL16_dom"/>
</dbReference>
<dbReference type="InterPro" id="IPR036920">
    <property type="entry name" value="Ribosomal_uL16_sf"/>
</dbReference>
<dbReference type="NCBIfam" id="TIGR01164">
    <property type="entry name" value="rplP_bact"/>
    <property type="match status" value="1"/>
</dbReference>
<dbReference type="PANTHER" id="PTHR12220">
    <property type="entry name" value="50S/60S RIBOSOMAL PROTEIN L16"/>
    <property type="match status" value="1"/>
</dbReference>
<dbReference type="PANTHER" id="PTHR12220:SF13">
    <property type="entry name" value="LARGE RIBOSOMAL SUBUNIT PROTEIN UL16M"/>
    <property type="match status" value="1"/>
</dbReference>
<dbReference type="Pfam" id="PF00252">
    <property type="entry name" value="Ribosomal_L16"/>
    <property type="match status" value="1"/>
</dbReference>
<dbReference type="PRINTS" id="PR00060">
    <property type="entry name" value="RIBOSOMALL16"/>
</dbReference>
<dbReference type="SUPFAM" id="SSF54686">
    <property type="entry name" value="Ribosomal protein L16p/L10e"/>
    <property type="match status" value="1"/>
</dbReference>
<dbReference type="PROSITE" id="PS00586">
    <property type="entry name" value="RIBOSOMAL_L16_1"/>
    <property type="match status" value="1"/>
</dbReference>
<dbReference type="PROSITE" id="PS00701">
    <property type="entry name" value="RIBOSOMAL_L16_2"/>
    <property type="match status" value="1"/>
</dbReference>
<comment type="function">
    <text evidence="1">Binds 23S rRNA and is also seen to make contacts with the A and possibly P site tRNAs.</text>
</comment>
<comment type="subunit">
    <text evidence="1">Part of the 50S ribosomal subunit.</text>
</comment>
<comment type="similarity">
    <text evidence="1">Belongs to the universal ribosomal protein uL16 family.</text>
</comment>
<keyword id="KW-0687">Ribonucleoprotein</keyword>
<keyword id="KW-0689">Ribosomal protein</keyword>
<keyword id="KW-0694">RNA-binding</keyword>
<keyword id="KW-0699">rRNA-binding</keyword>
<keyword id="KW-0820">tRNA-binding</keyword>
<proteinExistence type="inferred from homology"/>